<evidence type="ECO:0000255" key="1">
    <source>
        <dbReference type="HAMAP-Rule" id="MF_00454"/>
    </source>
</evidence>
<protein>
    <recommendedName>
        <fullName evidence="1">Fluoride-specific ion channel FluC</fullName>
    </recommendedName>
</protein>
<name>FLUC_NITV4</name>
<feature type="chain" id="PRO_1000026384" description="Fluoride-specific ion channel FluC">
    <location>
        <begin position="1"/>
        <end position="124"/>
    </location>
</feature>
<feature type="transmembrane region" description="Helical" evidence="1">
    <location>
        <begin position="4"/>
        <end position="24"/>
    </location>
</feature>
<feature type="transmembrane region" description="Helical" evidence="1">
    <location>
        <begin position="35"/>
        <end position="55"/>
    </location>
</feature>
<feature type="transmembrane region" description="Helical" evidence="1">
    <location>
        <begin position="67"/>
        <end position="87"/>
    </location>
</feature>
<feature type="transmembrane region" description="Helical" evidence="1">
    <location>
        <begin position="100"/>
        <end position="120"/>
    </location>
</feature>
<feature type="binding site" evidence="1">
    <location>
        <position position="75"/>
    </location>
    <ligand>
        <name>Na(+)</name>
        <dbReference type="ChEBI" id="CHEBI:29101"/>
        <note>structural</note>
    </ligand>
</feature>
<feature type="binding site" evidence="1">
    <location>
        <position position="78"/>
    </location>
    <ligand>
        <name>Na(+)</name>
        <dbReference type="ChEBI" id="CHEBI:29101"/>
        <note>structural</note>
    </ligand>
</feature>
<dbReference type="EMBL" id="CP000527">
    <property type="protein sequence ID" value="ABM28552.1"/>
    <property type="molecule type" value="Genomic_DNA"/>
</dbReference>
<dbReference type="RefSeq" id="WP_010938890.1">
    <property type="nucleotide sequence ID" value="NC_008751.1"/>
</dbReference>
<dbReference type="SMR" id="A1VDN6"/>
<dbReference type="KEGG" id="dvl:Dvul_1535"/>
<dbReference type="HOGENOM" id="CLU_114342_2_3_7"/>
<dbReference type="Proteomes" id="UP000009173">
    <property type="component" value="Chromosome"/>
</dbReference>
<dbReference type="GO" id="GO:0005886">
    <property type="term" value="C:plasma membrane"/>
    <property type="evidence" value="ECO:0007669"/>
    <property type="project" value="UniProtKB-SubCell"/>
</dbReference>
<dbReference type="GO" id="GO:0062054">
    <property type="term" value="F:fluoride channel activity"/>
    <property type="evidence" value="ECO:0007669"/>
    <property type="project" value="UniProtKB-UniRule"/>
</dbReference>
<dbReference type="GO" id="GO:0046872">
    <property type="term" value="F:metal ion binding"/>
    <property type="evidence" value="ECO:0007669"/>
    <property type="project" value="UniProtKB-KW"/>
</dbReference>
<dbReference type="GO" id="GO:0140114">
    <property type="term" value="P:cellular detoxification of fluoride"/>
    <property type="evidence" value="ECO:0007669"/>
    <property type="project" value="UniProtKB-UniRule"/>
</dbReference>
<dbReference type="HAMAP" id="MF_00454">
    <property type="entry name" value="FluC"/>
    <property type="match status" value="1"/>
</dbReference>
<dbReference type="InterPro" id="IPR003691">
    <property type="entry name" value="FluC"/>
</dbReference>
<dbReference type="NCBIfam" id="TIGR00494">
    <property type="entry name" value="crcB"/>
    <property type="match status" value="1"/>
</dbReference>
<dbReference type="PANTHER" id="PTHR28259">
    <property type="entry name" value="FLUORIDE EXPORT PROTEIN 1-RELATED"/>
    <property type="match status" value="1"/>
</dbReference>
<dbReference type="PANTHER" id="PTHR28259:SF1">
    <property type="entry name" value="FLUORIDE EXPORT PROTEIN 1-RELATED"/>
    <property type="match status" value="1"/>
</dbReference>
<dbReference type="Pfam" id="PF02537">
    <property type="entry name" value="CRCB"/>
    <property type="match status" value="1"/>
</dbReference>
<comment type="function">
    <text evidence="1">Fluoride-specific ion channel. Important for reducing fluoride concentration in the cell, thus reducing its toxicity.</text>
</comment>
<comment type="catalytic activity">
    <reaction evidence="1">
        <text>fluoride(in) = fluoride(out)</text>
        <dbReference type="Rhea" id="RHEA:76159"/>
        <dbReference type="ChEBI" id="CHEBI:17051"/>
    </reaction>
    <physiologicalReaction direction="left-to-right" evidence="1">
        <dbReference type="Rhea" id="RHEA:76160"/>
    </physiologicalReaction>
</comment>
<comment type="activity regulation">
    <text evidence="1">Na(+) is not transported, but it plays an essential structural role and its presence is essential for fluoride channel function.</text>
</comment>
<comment type="subcellular location">
    <subcellularLocation>
        <location evidence="1">Cell inner membrane</location>
        <topology evidence="1">Multi-pass membrane protein</topology>
    </subcellularLocation>
</comment>
<comment type="similarity">
    <text evidence="1">Belongs to the fluoride channel Fluc/FEX (TC 1.A.43) family.</text>
</comment>
<reference key="1">
    <citation type="journal article" date="2009" name="Environ. Microbiol.">
        <title>Contribution of mobile genetic elements to Desulfovibrio vulgaris genome plasticity.</title>
        <authorList>
            <person name="Walker C.B."/>
            <person name="Stolyar S."/>
            <person name="Chivian D."/>
            <person name="Pinel N."/>
            <person name="Gabster J.A."/>
            <person name="Dehal P.S."/>
            <person name="He Z."/>
            <person name="Yang Z.K."/>
            <person name="Yen H.C."/>
            <person name="Zhou J."/>
            <person name="Wall J.D."/>
            <person name="Hazen T.C."/>
            <person name="Arkin A.P."/>
            <person name="Stahl D.A."/>
        </authorList>
    </citation>
    <scope>NUCLEOTIDE SEQUENCE [LARGE SCALE GENOMIC DNA]</scope>
    <source>
        <strain>DP4</strain>
    </source>
</reference>
<gene>
    <name evidence="1" type="primary">fluC</name>
    <name evidence="1" type="synonym">crcB</name>
    <name type="ordered locus">Dvul_1535</name>
</gene>
<organism>
    <name type="scientific">Nitratidesulfovibrio vulgaris (strain DP4)</name>
    <name type="common">Desulfovibrio vulgaris</name>
    <dbReference type="NCBI Taxonomy" id="391774"/>
    <lineage>
        <taxon>Bacteria</taxon>
        <taxon>Pseudomonadati</taxon>
        <taxon>Thermodesulfobacteriota</taxon>
        <taxon>Desulfovibrionia</taxon>
        <taxon>Desulfovibrionales</taxon>
        <taxon>Desulfovibrionaceae</taxon>
        <taxon>Nitratidesulfovibrio</taxon>
    </lineage>
</organism>
<proteinExistence type="inferred from homology"/>
<accession>A1VDN6</accession>
<keyword id="KW-0997">Cell inner membrane</keyword>
<keyword id="KW-1003">Cell membrane</keyword>
<keyword id="KW-0407">Ion channel</keyword>
<keyword id="KW-0406">Ion transport</keyword>
<keyword id="KW-0472">Membrane</keyword>
<keyword id="KW-0479">Metal-binding</keyword>
<keyword id="KW-0915">Sodium</keyword>
<keyword id="KW-0812">Transmembrane</keyword>
<keyword id="KW-1133">Transmembrane helix</keyword>
<keyword id="KW-0813">Transport</keyword>
<sequence length="124" mass="13401">MHRFVLVATGGIFGSLARYVLSGVAQKLTTSSFPYGTVLVNLLGSLLFGLVWGILENRITFAPEARLLLLTGFMGSLTTFSTLTYEGMVLLQSHMWLQAALYIVGQTVAGIMLVWFGAGLGRLV</sequence>